<reference key="1">
    <citation type="journal article" date="1990" name="Mol. Microbiol.">
        <title>Inducible erythromycin resistance in staphylococci is encoded by a member of the ATP-binding transport super-gene family.</title>
        <authorList>
            <person name="Ross J.I."/>
            <person name="Eady E.A."/>
            <person name="Cove J.H."/>
            <person name="Cunliffe W.J."/>
            <person name="Baumberg S."/>
            <person name="Wootton J.C."/>
        </authorList>
    </citation>
    <scope>NUCLEOTIDE SEQUENCE [GENOMIC DNA]</scope>
    <source>
        <strain>968</strain>
    </source>
</reference>
<sequence length="8" mass="937">MTASMRLK</sequence>
<protein>
    <recommendedName>
        <fullName>Probable msrA leader peptide</fullName>
    </recommendedName>
</protein>
<accession>P23211</accession>
<organism>
    <name type="scientific">Staphylococcus epidermidis</name>
    <dbReference type="NCBI Taxonomy" id="1282"/>
    <lineage>
        <taxon>Bacteria</taxon>
        <taxon>Bacillati</taxon>
        <taxon>Bacillota</taxon>
        <taxon>Bacilli</taxon>
        <taxon>Bacillales</taxon>
        <taxon>Staphylococcaceae</taxon>
        <taxon>Staphylococcus</taxon>
    </lineage>
</organism>
<feature type="peptide" id="PRO_0000044002" description="Probable msrA leader peptide">
    <location>
        <begin position="1"/>
        <end position="8"/>
    </location>
</feature>
<proteinExistence type="predicted"/>
<geneLocation type="plasmid">
    <name>pUL5050</name>
</geneLocation>
<name>LPMS_STAEP</name>
<keyword id="KW-0428">Leader peptide</keyword>
<keyword id="KW-0614">Plasmid</keyword>
<comment type="function">
    <text>May regulate expression of the erythromycin resistance protein.</text>
</comment>
<dbReference type="EMBL" id="X52085">
    <property type="protein sequence ID" value="CAA36303.1"/>
    <property type="molecule type" value="Genomic_DNA"/>
</dbReference>
<dbReference type="PIR" id="S11157">
    <property type="entry name" value="LFSAME"/>
</dbReference>